<sequence>MFSALIPVSPLNAVKTRLKDFLTPDERIELIKNMLLDVYEGISPICDKIYVVSKDKEILEFLKPYAVIPIMETENIKGLNDALNYAFNYIEEDNIIITPADIPLIKKENINNIVKECKENSVILCPSRGGGTNLMVLNRSSIKTRYEGFSFLKHIEECKENNINPIIFPSFYISIDINTVEDLGEILIHGGGTYTYNYLKKLNINAKPKHSSAGRFEVIRQNTE</sequence>
<accession>A6UUS0</accession>
<dbReference type="EC" id="2.7.7.68" evidence="1"/>
<dbReference type="EMBL" id="CP000743">
    <property type="protein sequence ID" value="ABR56242.1"/>
    <property type="molecule type" value="Genomic_DNA"/>
</dbReference>
<dbReference type="RefSeq" id="WP_011973374.1">
    <property type="nucleotide sequence ID" value="NC_009635.1"/>
</dbReference>
<dbReference type="SMR" id="A6UUS0"/>
<dbReference type="STRING" id="419665.Maeo_0658"/>
<dbReference type="GeneID" id="5326798"/>
<dbReference type="KEGG" id="mae:Maeo_0658"/>
<dbReference type="eggNOG" id="arCOG04472">
    <property type="taxonomic scope" value="Archaea"/>
</dbReference>
<dbReference type="HOGENOM" id="CLU_076569_2_0_2"/>
<dbReference type="OrthoDB" id="11179at2157"/>
<dbReference type="UniPathway" id="UPA00071"/>
<dbReference type="Proteomes" id="UP000001106">
    <property type="component" value="Chromosome"/>
</dbReference>
<dbReference type="GO" id="GO:0005525">
    <property type="term" value="F:GTP binding"/>
    <property type="evidence" value="ECO:0007669"/>
    <property type="project" value="UniProtKB-KW"/>
</dbReference>
<dbReference type="GO" id="GO:0043814">
    <property type="term" value="F:phospholactate guanylyltransferase activity"/>
    <property type="evidence" value="ECO:0007669"/>
    <property type="project" value="UniProtKB-EC"/>
</dbReference>
<dbReference type="GO" id="GO:0052645">
    <property type="term" value="P:F420-0 metabolic process"/>
    <property type="evidence" value="ECO:0007669"/>
    <property type="project" value="UniProtKB-UniRule"/>
</dbReference>
<dbReference type="Gene3D" id="3.90.550.10">
    <property type="entry name" value="Spore Coat Polysaccharide Biosynthesis Protein SpsA, Chain A"/>
    <property type="match status" value="1"/>
</dbReference>
<dbReference type="HAMAP" id="MF_02114">
    <property type="entry name" value="CofC"/>
    <property type="match status" value="1"/>
</dbReference>
<dbReference type="InterPro" id="IPR002835">
    <property type="entry name" value="CofC"/>
</dbReference>
<dbReference type="InterPro" id="IPR029044">
    <property type="entry name" value="Nucleotide-diphossugar_trans"/>
</dbReference>
<dbReference type="NCBIfam" id="TIGR03552">
    <property type="entry name" value="F420_cofC"/>
    <property type="match status" value="1"/>
</dbReference>
<dbReference type="PANTHER" id="PTHR40392">
    <property type="entry name" value="2-PHOSPHO-L-LACTATE GUANYLYLTRANSFERASE"/>
    <property type="match status" value="1"/>
</dbReference>
<dbReference type="PANTHER" id="PTHR40392:SF1">
    <property type="entry name" value="2-PHOSPHO-L-LACTATE GUANYLYLTRANSFERASE"/>
    <property type="match status" value="1"/>
</dbReference>
<dbReference type="Pfam" id="PF01983">
    <property type="entry name" value="CofC"/>
    <property type="match status" value="1"/>
</dbReference>
<dbReference type="SUPFAM" id="SSF53448">
    <property type="entry name" value="Nucleotide-diphospho-sugar transferases"/>
    <property type="match status" value="1"/>
</dbReference>
<protein>
    <recommendedName>
        <fullName evidence="1">2-phospho-L-lactate guanylyltransferase</fullName>
        <shortName evidence="1">LP guanylyltransferase</shortName>
        <ecNumber evidence="1">2.7.7.68</ecNumber>
    </recommendedName>
</protein>
<evidence type="ECO:0000255" key="1">
    <source>
        <dbReference type="HAMAP-Rule" id="MF_02114"/>
    </source>
</evidence>
<proteinExistence type="inferred from homology"/>
<keyword id="KW-0342">GTP-binding</keyword>
<keyword id="KW-0547">Nucleotide-binding</keyword>
<keyword id="KW-0548">Nucleotidyltransferase</keyword>
<keyword id="KW-0808">Transferase</keyword>
<name>COFC_META3</name>
<reference key="1">
    <citation type="submission" date="2007-06" db="EMBL/GenBank/DDBJ databases">
        <title>Complete sequence of Methanococcus aeolicus Nankai-3.</title>
        <authorList>
            <consortium name="US DOE Joint Genome Institute"/>
            <person name="Copeland A."/>
            <person name="Lucas S."/>
            <person name="Lapidus A."/>
            <person name="Barry K."/>
            <person name="Glavina del Rio T."/>
            <person name="Dalin E."/>
            <person name="Tice H."/>
            <person name="Pitluck S."/>
            <person name="Chain P."/>
            <person name="Malfatti S."/>
            <person name="Shin M."/>
            <person name="Vergez L."/>
            <person name="Schmutz J."/>
            <person name="Larimer F."/>
            <person name="Land M."/>
            <person name="Hauser L."/>
            <person name="Kyrpides N."/>
            <person name="Lykidis A."/>
            <person name="Sieprawska-Lupa M."/>
            <person name="Whitman W.B."/>
            <person name="Richardson P."/>
        </authorList>
    </citation>
    <scope>NUCLEOTIDE SEQUENCE [LARGE SCALE GENOMIC DNA]</scope>
    <source>
        <strain>ATCC BAA-1280 / DSM 17508 / OCM 812 / Nankai-3</strain>
    </source>
</reference>
<organism>
    <name type="scientific">Methanococcus aeolicus (strain ATCC BAA-1280 / DSM 17508 / OCM 812 / Nankai-3)</name>
    <dbReference type="NCBI Taxonomy" id="419665"/>
    <lineage>
        <taxon>Archaea</taxon>
        <taxon>Methanobacteriati</taxon>
        <taxon>Methanobacteriota</taxon>
        <taxon>Methanomada group</taxon>
        <taxon>Methanococci</taxon>
        <taxon>Methanococcales</taxon>
        <taxon>Methanococcaceae</taxon>
        <taxon>Methanococcus</taxon>
    </lineage>
</organism>
<feature type="chain" id="PRO_0000398743" description="2-phospho-L-lactate guanylyltransferase">
    <location>
        <begin position="1"/>
        <end position="224"/>
    </location>
</feature>
<comment type="function">
    <text evidence="1">Guanylyltransferase that catalyzes the activation of (2S)-2-phospholactate (2-PL) as (2S)-lactyl-2-diphospho-5'-guanosine, via the condensation of 2-PL with GTP. It is involved in the biosynthesis of coenzyme F420, a hydride carrier cofactor.</text>
</comment>
<comment type="catalytic activity">
    <reaction evidence="1">
        <text>(2S)-2-phospholactate + GTP + H(+) = (2S)-lactyl-2-diphospho-5'-guanosine + diphosphate</text>
        <dbReference type="Rhea" id="RHEA:63424"/>
        <dbReference type="ChEBI" id="CHEBI:15378"/>
        <dbReference type="ChEBI" id="CHEBI:33019"/>
        <dbReference type="ChEBI" id="CHEBI:37565"/>
        <dbReference type="ChEBI" id="CHEBI:59435"/>
        <dbReference type="ChEBI" id="CHEBI:59906"/>
        <dbReference type="EC" id="2.7.7.68"/>
    </reaction>
</comment>
<comment type="pathway">
    <text evidence="1">Cofactor biosynthesis; coenzyme F420 biosynthesis.</text>
</comment>
<comment type="subunit">
    <text evidence="1">Homodimer.</text>
</comment>
<comment type="similarity">
    <text evidence="1">Belongs to the CofC family.</text>
</comment>
<gene>
    <name evidence="1" type="primary">cofC</name>
    <name type="ordered locus">Maeo_0658</name>
</gene>